<organism>
    <name type="scientific">Rickettsia rickettsii (strain Sheila Smith)</name>
    <dbReference type="NCBI Taxonomy" id="392021"/>
    <lineage>
        <taxon>Bacteria</taxon>
        <taxon>Pseudomonadati</taxon>
        <taxon>Pseudomonadota</taxon>
        <taxon>Alphaproteobacteria</taxon>
        <taxon>Rickettsiales</taxon>
        <taxon>Rickettsiaceae</taxon>
        <taxon>Rickettsieae</taxon>
        <taxon>Rickettsia</taxon>
        <taxon>spotted fever group</taxon>
    </lineage>
</organism>
<protein>
    <recommendedName>
        <fullName evidence="1">Porphobilinogen deaminase</fullName>
        <shortName evidence="1">PBG</shortName>
        <ecNumber evidence="1">2.5.1.61</ecNumber>
    </recommendedName>
    <alternativeName>
        <fullName evidence="1">Hydroxymethylbilane synthase</fullName>
        <shortName evidence="1">HMBS</shortName>
    </alternativeName>
    <alternativeName>
        <fullName evidence="1">Pre-uroporphyrinogen synthase</fullName>
    </alternativeName>
</protein>
<comment type="function">
    <text evidence="1">Tetrapolymerization of the monopyrrole PBG into the hydroxymethylbilane pre-uroporphyrinogen in several discrete steps.</text>
</comment>
<comment type="catalytic activity">
    <reaction evidence="1">
        <text>4 porphobilinogen + H2O = hydroxymethylbilane + 4 NH4(+)</text>
        <dbReference type="Rhea" id="RHEA:13185"/>
        <dbReference type="ChEBI" id="CHEBI:15377"/>
        <dbReference type="ChEBI" id="CHEBI:28938"/>
        <dbReference type="ChEBI" id="CHEBI:57845"/>
        <dbReference type="ChEBI" id="CHEBI:58126"/>
        <dbReference type="EC" id="2.5.1.61"/>
    </reaction>
</comment>
<comment type="cofactor">
    <cofactor evidence="1">
        <name>dipyrromethane</name>
        <dbReference type="ChEBI" id="CHEBI:60342"/>
    </cofactor>
    <text evidence="1">Binds 1 dipyrromethane group covalently.</text>
</comment>
<comment type="pathway">
    <text evidence="1">Porphyrin-containing compound metabolism; protoporphyrin-IX biosynthesis; coproporphyrinogen-III from 5-aminolevulinate: step 2/4.</text>
</comment>
<comment type="subunit">
    <text evidence="1">Monomer.</text>
</comment>
<comment type="miscellaneous">
    <text evidence="1">The porphobilinogen subunits are added to the dipyrromethane group.</text>
</comment>
<comment type="similarity">
    <text evidence="1">Belongs to the HMBS family.</text>
</comment>
<sequence>MTNSIRIGTRKSPLALIHTNLVIQQIKQFFPDINCEIVPIITSGDLIQNKPLYDIGGKALFLKEIEQALLDKKIDLAVHSLKDVPGRIPEPLVIAAVLEREDPRDVFVCLKYKSIEELPQNAVIGSSAVRRKAFIQKIRPDLKVTVFRGNVDSRIKKLMTGEVDATILAYTGLKRLEVFNPEYCHLIEYSQMLPCIGQGVIAVEIRKDDNAMLEICNQINHLPTFELIKPERAFLEYLDANCRTPIAAYSQYLDANPRHLSKLAYREVFEGNTEALATAAYKSNRTDASTGLTYKLPLEVEFGKMSNIQTNFMLGNLDGSKITFHTETTNIKTSTEAGIKAAKMMLEAICK</sequence>
<name>HEM3_RICRS</name>
<reference key="1">
    <citation type="submission" date="2007-09" db="EMBL/GenBank/DDBJ databases">
        <title>Complete genome sequence of Rickettsia rickettsii.</title>
        <authorList>
            <person name="Madan A."/>
            <person name="Fahey J."/>
            <person name="Helton E."/>
            <person name="Ketteman M."/>
            <person name="Madan A."/>
            <person name="Rodrigues S."/>
            <person name="Sanchez A."/>
            <person name="Dasch G."/>
            <person name="Eremeeva M."/>
        </authorList>
    </citation>
    <scope>NUCLEOTIDE SEQUENCE [LARGE SCALE GENOMIC DNA]</scope>
    <source>
        <strain>Sheila Smith</strain>
    </source>
</reference>
<proteinExistence type="inferred from homology"/>
<keyword id="KW-0627">Porphyrin biosynthesis</keyword>
<keyword id="KW-0808">Transferase</keyword>
<evidence type="ECO:0000255" key="1">
    <source>
        <dbReference type="HAMAP-Rule" id="MF_00260"/>
    </source>
</evidence>
<feature type="chain" id="PRO_1000078618" description="Porphobilinogen deaminase">
    <location>
        <begin position="1"/>
        <end position="351"/>
    </location>
</feature>
<feature type="modified residue" description="S-(dipyrrolylmethanemethyl)cysteine" evidence="1">
    <location>
        <position position="242"/>
    </location>
</feature>
<dbReference type="EC" id="2.5.1.61" evidence="1"/>
<dbReference type="EMBL" id="CP000848">
    <property type="protein sequence ID" value="ABV76361.1"/>
    <property type="molecule type" value="Genomic_DNA"/>
</dbReference>
<dbReference type="RefSeq" id="WP_012150935.1">
    <property type="nucleotide sequence ID" value="NZ_CP121767.1"/>
</dbReference>
<dbReference type="SMR" id="A8GSI6"/>
<dbReference type="GeneID" id="79937479"/>
<dbReference type="KEGG" id="rri:A1G_04275"/>
<dbReference type="HOGENOM" id="CLU_019704_0_2_5"/>
<dbReference type="UniPathway" id="UPA00251">
    <property type="reaction ID" value="UER00319"/>
</dbReference>
<dbReference type="Proteomes" id="UP000006832">
    <property type="component" value="Chromosome"/>
</dbReference>
<dbReference type="GO" id="GO:0005737">
    <property type="term" value="C:cytoplasm"/>
    <property type="evidence" value="ECO:0007669"/>
    <property type="project" value="TreeGrafter"/>
</dbReference>
<dbReference type="GO" id="GO:0004418">
    <property type="term" value="F:hydroxymethylbilane synthase activity"/>
    <property type="evidence" value="ECO:0007669"/>
    <property type="project" value="UniProtKB-UniRule"/>
</dbReference>
<dbReference type="GO" id="GO:0006782">
    <property type="term" value="P:protoporphyrinogen IX biosynthetic process"/>
    <property type="evidence" value="ECO:0007669"/>
    <property type="project" value="UniProtKB-UniRule"/>
</dbReference>
<dbReference type="CDD" id="cd13647">
    <property type="entry name" value="PBP2_PBGD_2"/>
    <property type="match status" value="1"/>
</dbReference>
<dbReference type="FunFam" id="3.40.190.10:FF:000004">
    <property type="entry name" value="Porphobilinogen deaminase"/>
    <property type="match status" value="1"/>
</dbReference>
<dbReference type="FunFam" id="3.40.190.10:FF:000005">
    <property type="entry name" value="Porphobilinogen deaminase"/>
    <property type="match status" value="1"/>
</dbReference>
<dbReference type="Gene3D" id="3.40.190.10">
    <property type="entry name" value="Periplasmic binding protein-like II"/>
    <property type="match status" value="2"/>
</dbReference>
<dbReference type="Gene3D" id="3.30.160.40">
    <property type="entry name" value="Porphobilinogen deaminase, C-terminal domain"/>
    <property type="match status" value="1"/>
</dbReference>
<dbReference type="HAMAP" id="MF_00260">
    <property type="entry name" value="Porphobil_deam"/>
    <property type="match status" value="1"/>
</dbReference>
<dbReference type="InterPro" id="IPR000860">
    <property type="entry name" value="HemC"/>
</dbReference>
<dbReference type="InterPro" id="IPR022419">
    <property type="entry name" value="Porphobilin_deaminase_cofac_BS"/>
</dbReference>
<dbReference type="InterPro" id="IPR022417">
    <property type="entry name" value="Porphobilin_deaminase_N"/>
</dbReference>
<dbReference type="InterPro" id="IPR022418">
    <property type="entry name" value="Porphobilinogen_deaminase_C"/>
</dbReference>
<dbReference type="InterPro" id="IPR036803">
    <property type="entry name" value="Porphobilinogen_deaminase_C_sf"/>
</dbReference>
<dbReference type="InterPro" id="IPR005728">
    <property type="entry name" value="RPE1"/>
</dbReference>
<dbReference type="NCBIfam" id="TIGR00212">
    <property type="entry name" value="hemC"/>
    <property type="match status" value="1"/>
</dbReference>
<dbReference type="NCBIfam" id="TIGR01045">
    <property type="entry name" value="RPE1"/>
    <property type="match status" value="1"/>
</dbReference>
<dbReference type="PANTHER" id="PTHR11557">
    <property type="entry name" value="PORPHOBILINOGEN DEAMINASE"/>
    <property type="match status" value="1"/>
</dbReference>
<dbReference type="PANTHER" id="PTHR11557:SF0">
    <property type="entry name" value="PORPHOBILINOGEN DEAMINASE"/>
    <property type="match status" value="1"/>
</dbReference>
<dbReference type="Pfam" id="PF01379">
    <property type="entry name" value="Porphobil_deam"/>
    <property type="match status" value="1"/>
</dbReference>
<dbReference type="Pfam" id="PF03900">
    <property type="entry name" value="Porphobil_deamC"/>
    <property type="match status" value="1"/>
</dbReference>
<dbReference type="PIRSF" id="PIRSF001438">
    <property type="entry name" value="4pyrrol_synth_OHMeBilane_synth"/>
    <property type="match status" value="1"/>
</dbReference>
<dbReference type="PRINTS" id="PR00151">
    <property type="entry name" value="PORPHBDMNASE"/>
</dbReference>
<dbReference type="SUPFAM" id="SSF53850">
    <property type="entry name" value="Periplasmic binding protein-like II"/>
    <property type="match status" value="1"/>
</dbReference>
<dbReference type="SUPFAM" id="SSF54782">
    <property type="entry name" value="Porphobilinogen deaminase (hydroxymethylbilane synthase), C-terminal domain"/>
    <property type="match status" value="1"/>
</dbReference>
<dbReference type="PROSITE" id="PS00533">
    <property type="entry name" value="PORPHOBILINOGEN_DEAM"/>
    <property type="match status" value="1"/>
</dbReference>
<gene>
    <name evidence="1" type="primary">hemC</name>
    <name type="ordered locus">A1G_04275</name>
</gene>
<accession>A8GSI6</accession>